<evidence type="ECO:0000305" key="1"/>
<dbReference type="EMBL" id="M15952">
    <property type="protein sequence ID" value="AAA42489.1"/>
    <property type="molecule type" value="Genomic_DNA"/>
</dbReference>
<dbReference type="EMBL" id="X01998">
    <property type="protein sequence ID" value="CAA26028.1"/>
    <property type="molecule type" value="Genomic_DNA"/>
</dbReference>
<dbReference type="PIR" id="A27623">
    <property type="entry name" value="ERAD29"/>
</dbReference>
<dbReference type="GO" id="GO:0052031">
    <property type="term" value="P:symbiont-mediated perturbation of host defense response"/>
    <property type="evidence" value="ECO:0007669"/>
    <property type="project" value="InterPro"/>
</dbReference>
<dbReference type="GO" id="GO:0033668">
    <property type="term" value="P:symbiont-mediated suppression of host apoptosis"/>
    <property type="evidence" value="ECO:0007669"/>
    <property type="project" value="UniProtKB-KW"/>
</dbReference>
<dbReference type="InterPro" id="IPR004985">
    <property type="entry name" value="Adeno_E3-15"/>
</dbReference>
<dbReference type="Pfam" id="PF03307">
    <property type="entry name" value="Adeno_E3_15_3"/>
    <property type="match status" value="1"/>
</dbReference>
<keyword id="KW-0244">Early protein</keyword>
<keyword id="KW-0945">Host-virus interaction</keyword>
<keyword id="KW-1085">Inhibition of host caspases by virus</keyword>
<keyword id="KW-1119">Modulation of host cell apoptosis by virus</keyword>
<comment type="function">
    <text>Protects virus-infected cells from TNF-induced cytolysis.</text>
</comment>
<comment type="similarity">
    <text evidence="1">Belongs to the adenoviridae E3_15 family.</text>
</comment>
<organism>
    <name type="scientific">Human adenovirus B serotype 3</name>
    <name type="common">HAdV-3</name>
    <name type="synonym">Human adenovirus 3</name>
    <dbReference type="NCBI Taxonomy" id="45659"/>
    <lineage>
        <taxon>Viruses</taxon>
        <taxon>Varidnaviria</taxon>
        <taxon>Bamfordvirae</taxon>
        <taxon>Preplasmiviricota</taxon>
        <taxon>Tectiliviricetes</taxon>
        <taxon>Rowavirales</taxon>
        <taxon>Adenoviridae</taxon>
        <taxon>Mastadenovirus</taxon>
        <taxon>Human mastadenovirus B</taxon>
    </lineage>
</organism>
<accession>P11315</accession>
<feature type="chain" id="PRO_0000221746" description="Early E3 15.3 kDa protein">
    <location>
        <begin position="1"/>
        <end position="136"/>
    </location>
</feature>
<sequence length="136" mass="15266">MTDPIATSSTAAKELLDMDGRASEQRLIQLRIRQQQERAVKELRDAIGIHQCKKGIFCLVKQSKISYEITATDHRLSYELGPQRQKFTCMVGINPIVITQQSGDTKGCIQCSCDSTECIYTLLKTLCGLRDLLPMN</sequence>
<organismHost>
    <name type="scientific">Homo sapiens</name>
    <name type="common">Human</name>
    <dbReference type="NCBI Taxonomy" id="9606"/>
</organismHost>
<protein>
    <recommendedName>
        <fullName>Early E3 15.3 kDa protein</fullName>
    </recommendedName>
</protein>
<reference key="1">
    <citation type="journal article" date="1986" name="Gene">
        <title>Region E3 of human adenoviruses; differences between the oncogenic adenovirus-3 and the non-oncogenic adenovirus-2.</title>
        <authorList>
            <person name="Signaes C."/>
            <person name="Akusjaervi G."/>
            <person name="Pettersson U."/>
        </authorList>
    </citation>
    <scope>NUCLEOTIDE SEQUENCE [GENOMIC DNA]</scope>
</reference>
<reference key="2">
    <citation type="journal article" date="1985" name="J. Virol.">
        <title>Adenovirus 3 fiber polypeptide gene: implications for the structure of the fiber protein.</title>
        <authorList>
            <person name="Signaes C."/>
            <person name="Akusjaervi G."/>
            <person name="Pettersson U."/>
        </authorList>
    </citation>
    <scope>NUCLEOTIDE SEQUENCE [GENOMIC DNA] OF 128-136</scope>
</reference>
<reference key="3">
    <citation type="journal article" date="1990" name="J. Virol.">
        <title>A protein serologically and functionally related to the group C E3 14,700-kilodalton protein is found in multiple adenovirus serotypes.</title>
        <authorList>
            <person name="Horton T.H."/>
            <person name="Tollefson A.E."/>
            <person name="Wold W.S.M."/>
            <person name="Gooding L.R."/>
        </authorList>
    </citation>
    <scope>IDENTIFICATION OF PROTEIN</scope>
</reference>
<name>E3145_ADE03</name>
<proteinExistence type="inferred from homology"/>